<protein>
    <recommendedName>
        <fullName evidence="1">Large ribosomal subunit protein uL5</fullName>
    </recommendedName>
    <alternativeName>
        <fullName evidence="2">50S ribosomal protein L5</fullName>
    </alternativeName>
</protein>
<comment type="function">
    <text evidence="1">This is one of the proteins that bind and probably mediate the attachment of the 5S RNA into the large ribosomal subunit, where it forms part of the central protuberance. In the 70S ribosome it contacts protein S13 of the 30S subunit (bridge B1b), connecting the 2 subunits; this bridge is implicated in subunit movement. Contacts the P site tRNA; the 5S rRNA and some of its associated proteins might help stabilize positioning of ribosome-bound tRNAs.</text>
</comment>
<comment type="subunit">
    <text evidence="1">Part of the 50S ribosomal subunit; part of the 5S rRNA/L5/L18/L25 subcomplex. Contacts the 5S rRNA and the P site tRNA. Forms a bridge to the 30S subunit in the 70S ribosome.</text>
</comment>
<comment type="similarity">
    <text evidence="1">Belongs to the universal ribosomal protein uL5 family.</text>
</comment>
<accession>B7IA27</accession>
<name>RL5_ACIB5</name>
<feature type="chain" id="PRO_1000142341" description="Large ribosomal subunit protein uL5">
    <location>
        <begin position="1"/>
        <end position="178"/>
    </location>
</feature>
<feature type="helix" evidence="3">
    <location>
        <begin position="6"/>
        <end position="20"/>
    </location>
</feature>
<feature type="strand" evidence="3">
    <location>
        <begin position="31"/>
        <end position="38"/>
    </location>
</feature>
<feature type="turn" evidence="3">
    <location>
        <begin position="44"/>
        <end position="46"/>
    </location>
</feature>
<feature type="helix" evidence="3">
    <location>
        <begin position="49"/>
        <end position="60"/>
    </location>
</feature>
<feature type="strand" evidence="3">
    <location>
        <begin position="61"/>
        <end position="63"/>
    </location>
</feature>
<feature type="strand" evidence="3">
    <location>
        <begin position="66"/>
        <end position="69"/>
    </location>
</feature>
<feature type="strand" evidence="3">
    <location>
        <begin position="75"/>
        <end position="78"/>
    </location>
</feature>
<feature type="strand" evidence="3">
    <location>
        <begin position="84"/>
        <end position="92"/>
    </location>
</feature>
<feature type="helix" evidence="3">
    <location>
        <begin position="93"/>
        <end position="106"/>
    </location>
</feature>
<feature type="turn" evidence="3">
    <location>
        <begin position="107"/>
        <end position="110"/>
    </location>
</feature>
<feature type="strand" evidence="3">
    <location>
        <begin position="124"/>
        <end position="126"/>
    </location>
</feature>
<feature type="strand" evidence="3">
    <location>
        <begin position="128"/>
        <end position="134"/>
    </location>
</feature>
<feature type="strand" evidence="3">
    <location>
        <begin position="138"/>
        <end position="140"/>
    </location>
</feature>
<feature type="strand" evidence="3">
    <location>
        <begin position="152"/>
        <end position="158"/>
    </location>
</feature>
<feature type="helix" evidence="3">
    <location>
        <begin position="163"/>
        <end position="173"/>
    </location>
</feature>
<keyword id="KW-0002">3D-structure</keyword>
<keyword id="KW-0687">Ribonucleoprotein</keyword>
<keyword id="KW-0689">Ribosomal protein</keyword>
<keyword id="KW-0694">RNA-binding</keyword>
<keyword id="KW-0699">rRNA-binding</keyword>
<keyword id="KW-0820">tRNA-binding</keyword>
<dbReference type="EMBL" id="CP001182">
    <property type="protein sequence ID" value="ACJ42885.1"/>
    <property type="molecule type" value="Genomic_DNA"/>
</dbReference>
<dbReference type="RefSeq" id="WP_000113197.1">
    <property type="nucleotide sequence ID" value="NC_011586.2"/>
</dbReference>
<dbReference type="PDB" id="6V39">
    <property type="method" value="EM"/>
    <property type="resolution" value="3.04 A"/>
    <property type="chains" value="F=1-178"/>
</dbReference>
<dbReference type="PDB" id="6V3A">
    <property type="method" value="EM"/>
    <property type="resolution" value="2.82 A"/>
    <property type="chains" value="F=1-178"/>
</dbReference>
<dbReference type="PDB" id="6V3B">
    <property type="method" value="EM"/>
    <property type="resolution" value="2.91 A"/>
    <property type="chains" value="F=1-178"/>
</dbReference>
<dbReference type="PDB" id="6V3D">
    <property type="method" value="EM"/>
    <property type="resolution" value="2.95 A"/>
    <property type="chains" value="F=1-178"/>
</dbReference>
<dbReference type="PDB" id="7M4V">
    <property type="method" value="EM"/>
    <property type="resolution" value="2.54 A"/>
    <property type="chains" value="F=1-178"/>
</dbReference>
<dbReference type="PDB" id="7M4W">
    <property type="method" value="EM"/>
    <property type="resolution" value="2.55 A"/>
    <property type="chains" value="F=1-178"/>
</dbReference>
<dbReference type="PDB" id="7M4X">
    <property type="method" value="EM"/>
    <property type="resolution" value="2.66 A"/>
    <property type="chains" value="F=1-178"/>
</dbReference>
<dbReference type="PDB" id="7M4Y">
    <property type="method" value="EM"/>
    <property type="resolution" value="2.50 A"/>
    <property type="chains" value="F=1-178"/>
</dbReference>
<dbReference type="PDB" id="7M4Z">
    <property type="method" value="EM"/>
    <property type="resolution" value="2.92 A"/>
    <property type="chains" value="F=1-178"/>
</dbReference>
<dbReference type="PDB" id="7RYF">
    <property type="method" value="EM"/>
    <property type="resolution" value="2.65 A"/>
    <property type="chains" value="F=1-178"/>
</dbReference>
<dbReference type="PDB" id="7RYG">
    <property type="method" value="EM"/>
    <property type="resolution" value="2.38 A"/>
    <property type="chains" value="F=1-178"/>
</dbReference>
<dbReference type="PDB" id="7RYH">
    <property type="method" value="EM"/>
    <property type="resolution" value="2.43 A"/>
    <property type="chains" value="F=1-178"/>
</dbReference>
<dbReference type="PDB" id="7UVV">
    <property type="method" value="EM"/>
    <property type="resolution" value="2.50 A"/>
    <property type="chains" value="F=1-178"/>
</dbReference>
<dbReference type="PDB" id="7UVW">
    <property type="method" value="EM"/>
    <property type="resolution" value="2.37 A"/>
    <property type="chains" value="F=1-178"/>
</dbReference>
<dbReference type="PDB" id="7UVX">
    <property type="method" value="EM"/>
    <property type="resolution" value="2.35 A"/>
    <property type="chains" value="F=1-178"/>
</dbReference>
<dbReference type="PDB" id="7UVY">
    <property type="method" value="EM"/>
    <property type="resolution" value="2.39 A"/>
    <property type="chains" value="F=1-178"/>
</dbReference>
<dbReference type="PDB" id="7UVZ">
    <property type="method" value="EM"/>
    <property type="resolution" value="2.21 A"/>
    <property type="chains" value="F=1-178"/>
</dbReference>
<dbReference type="PDB" id="7UW1">
    <property type="method" value="EM"/>
    <property type="resolution" value="2.21 A"/>
    <property type="chains" value="F=1-178"/>
</dbReference>
<dbReference type="PDBsum" id="6V39"/>
<dbReference type="PDBsum" id="6V3A"/>
<dbReference type="PDBsum" id="6V3B"/>
<dbReference type="PDBsum" id="6V3D"/>
<dbReference type="PDBsum" id="7M4V"/>
<dbReference type="PDBsum" id="7M4W"/>
<dbReference type="PDBsum" id="7M4X"/>
<dbReference type="PDBsum" id="7M4Y"/>
<dbReference type="PDBsum" id="7M4Z"/>
<dbReference type="PDBsum" id="7RYF"/>
<dbReference type="PDBsum" id="7RYG"/>
<dbReference type="PDBsum" id="7RYH"/>
<dbReference type="PDBsum" id="7UVV"/>
<dbReference type="PDBsum" id="7UVW"/>
<dbReference type="PDBsum" id="7UVX"/>
<dbReference type="PDBsum" id="7UVY"/>
<dbReference type="PDBsum" id="7UVZ"/>
<dbReference type="PDBsum" id="7UW1"/>
<dbReference type="EMDB" id="EMD-21030"/>
<dbReference type="EMDB" id="EMD-21031"/>
<dbReference type="EMDB" id="EMD-21032"/>
<dbReference type="EMDB" id="EMD-21033"/>
<dbReference type="EMDB" id="EMD-23667"/>
<dbReference type="EMDB" id="EMD-23668"/>
<dbReference type="EMDB" id="EMD-23669"/>
<dbReference type="EMDB" id="EMD-23670"/>
<dbReference type="EMDB" id="EMD-23671"/>
<dbReference type="EMDB" id="EMD-24738"/>
<dbReference type="EMDB" id="EMD-24739"/>
<dbReference type="EMDB" id="EMD-24740"/>
<dbReference type="EMDB" id="EMD-26817"/>
<dbReference type="EMDB" id="EMD-26818"/>
<dbReference type="EMDB" id="EMD-26819"/>
<dbReference type="EMDB" id="EMD-26820"/>
<dbReference type="EMDB" id="EMD-26821"/>
<dbReference type="EMDB" id="EMD-26822"/>
<dbReference type="SMR" id="B7IA27"/>
<dbReference type="IntAct" id="B7IA27">
    <property type="interactions" value="2"/>
</dbReference>
<dbReference type="GeneID" id="92895305"/>
<dbReference type="KEGG" id="abn:AB57_3518"/>
<dbReference type="HOGENOM" id="CLU_061015_2_1_6"/>
<dbReference type="Proteomes" id="UP000007094">
    <property type="component" value="Chromosome"/>
</dbReference>
<dbReference type="GO" id="GO:1990904">
    <property type="term" value="C:ribonucleoprotein complex"/>
    <property type="evidence" value="ECO:0007669"/>
    <property type="project" value="UniProtKB-KW"/>
</dbReference>
<dbReference type="GO" id="GO:0005840">
    <property type="term" value="C:ribosome"/>
    <property type="evidence" value="ECO:0007669"/>
    <property type="project" value="UniProtKB-KW"/>
</dbReference>
<dbReference type="GO" id="GO:0019843">
    <property type="term" value="F:rRNA binding"/>
    <property type="evidence" value="ECO:0007669"/>
    <property type="project" value="UniProtKB-UniRule"/>
</dbReference>
<dbReference type="GO" id="GO:0003735">
    <property type="term" value="F:structural constituent of ribosome"/>
    <property type="evidence" value="ECO:0007669"/>
    <property type="project" value="InterPro"/>
</dbReference>
<dbReference type="GO" id="GO:0000049">
    <property type="term" value="F:tRNA binding"/>
    <property type="evidence" value="ECO:0007669"/>
    <property type="project" value="UniProtKB-UniRule"/>
</dbReference>
<dbReference type="GO" id="GO:0006412">
    <property type="term" value="P:translation"/>
    <property type="evidence" value="ECO:0007669"/>
    <property type="project" value="UniProtKB-UniRule"/>
</dbReference>
<dbReference type="FunFam" id="3.30.1440.10:FF:000001">
    <property type="entry name" value="50S ribosomal protein L5"/>
    <property type="match status" value="1"/>
</dbReference>
<dbReference type="Gene3D" id="3.30.1440.10">
    <property type="match status" value="1"/>
</dbReference>
<dbReference type="HAMAP" id="MF_01333_B">
    <property type="entry name" value="Ribosomal_uL5_B"/>
    <property type="match status" value="1"/>
</dbReference>
<dbReference type="InterPro" id="IPR002132">
    <property type="entry name" value="Ribosomal_uL5"/>
</dbReference>
<dbReference type="InterPro" id="IPR020930">
    <property type="entry name" value="Ribosomal_uL5_bac-type"/>
</dbReference>
<dbReference type="InterPro" id="IPR031309">
    <property type="entry name" value="Ribosomal_uL5_C"/>
</dbReference>
<dbReference type="InterPro" id="IPR020929">
    <property type="entry name" value="Ribosomal_uL5_CS"/>
</dbReference>
<dbReference type="InterPro" id="IPR022803">
    <property type="entry name" value="Ribosomal_uL5_dom_sf"/>
</dbReference>
<dbReference type="InterPro" id="IPR031310">
    <property type="entry name" value="Ribosomal_uL5_N"/>
</dbReference>
<dbReference type="NCBIfam" id="NF000585">
    <property type="entry name" value="PRK00010.1"/>
    <property type="match status" value="1"/>
</dbReference>
<dbReference type="PANTHER" id="PTHR11994">
    <property type="entry name" value="60S RIBOSOMAL PROTEIN L11-RELATED"/>
    <property type="match status" value="1"/>
</dbReference>
<dbReference type="Pfam" id="PF00281">
    <property type="entry name" value="Ribosomal_L5"/>
    <property type="match status" value="1"/>
</dbReference>
<dbReference type="Pfam" id="PF00673">
    <property type="entry name" value="Ribosomal_L5_C"/>
    <property type="match status" value="1"/>
</dbReference>
<dbReference type="PIRSF" id="PIRSF002161">
    <property type="entry name" value="Ribosomal_L5"/>
    <property type="match status" value="1"/>
</dbReference>
<dbReference type="SUPFAM" id="SSF55282">
    <property type="entry name" value="RL5-like"/>
    <property type="match status" value="1"/>
</dbReference>
<dbReference type="PROSITE" id="PS00358">
    <property type="entry name" value="RIBOSOMAL_L5"/>
    <property type="match status" value="1"/>
</dbReference>
<organism>
    <name type="scientific">Acinetobacter baumannii (strain AB0057)</name>
    <dbReference type="NCBI Taxonomy" id="480119"/>
    <lineage>
        <taxon>Bacteria</taxon>
        <taxon>Pseudomonadati</taxon>
        <taxon>Pseudomonadota</taxon>
        <taxon>Gammaproteobacteria</taxon>
        <taxon>Moraxellales</taxon>
        <taxon>Moraxellaceae</taxon>
        <taxon>Acinetobacter</taxon>
        <taxon>Acinetobacter calcoaceticus/baumannii complex</taxon>
    </lineage>
</organism>
<gene>
    <name evidence="1" type="primary">rplE</name>
    <name type="ordered locus">AB57_3518</name>
</gene>
<proteinExistence type="evidence at protein level"/>
<sequence length="178" mass="20020">MARLKARYNDELKAKLQEELSIKNVMEIPRITKITLNMGVGAAATDKKLLDGAVADMQLIAGQKPVVTLARKSIAGFKIRDGWPIGCKVTLRGDQMYEFLDRLISIAIPRIRDFRGFSAKSFDGRGNYSMGLKEQIVFPEIDFDKIDRIRGMDITITTTARTDDEGRALMRAFGFPFK</sequence>
<reference key="1">
    <citation type="journal article" date="2008" name="J. Bacteriol.">
        <title>Comparative genome sequence analysis of multidrug-resistant Acinetobacter baumannii.</title>
        <authorList>
            <person name="Adams M.D."/>
            <person name="Goglin K."/>
            <person name="Molyneaux N."/>
            <person name="Hujer K.M."/>
            <person name="Lavender H."/>
            <person name="Jamison J.J."/>
            <person name="MacDonald I.J."/>
            <person name="Martin K.M."/>
            <person name="Russo T."/>
            <person name="Campagnari A.A."/>
            <person name="Hujer A.M."/>
            <person name="Bonomo R.A."/>
            <person name="Gill S.R."/>
        </authorList>
    </citation>
    <scope>NUCLEOTIDE SEQUENCE [LARGE SCALE GENOMIC DNA]</scope>
    <source>
        <strain>AB0057</strain>
    </source>
</reference>
<evidence type="ECO:0000255" key="1">
    <source>
        <dbReference type="HAMAP-Rule" id="MF_01333"/>
    </source>
</evidence>
<evidence type="ECO:0000305" key="2"/>
<evidence type="ECO:0007829" key="3">
    <source>
        <dbReference type="PDB" id="7M4V"/>
    </source>
</evidence>